<name>GPMA_STRPM</name>
<gene>
    <name evidence="1" type="primary">gpmA</name>
    <name type="ordered locus">M28_Spy1158</name>
</gene>
<comment type="function">
    <text evidence="1">Catalyzes the interconversion of 2-phosphoglycerate and 3-phosphoglycerate.</text>
</comment>
<comment type="catalytic activity">
    <reaction evidence="1">
        <text>(2R)-2-phosphoglycerate = (2R)-3-phosphoglycerate</text>
        <dbReference type="Rhea" id="RHEA:15901"/>
        <dbReference type="ChEBI" id="CHEBI:58272"/>
        <dbReference type="ChEBI" id="CHEBI:58289"/>
        <dbReference type="EC" id="5.4.2.11"/>
    </reaction>
</comment>
<comment type="pathway">
    <text evidence="1">Carbohydrate degradation; glycolysis; pyruvate from D-glyceraldehyde 3-phosphate: step 3/5.</text>
</comment>
<comment type="similarity">
    <text evidence="1">Belongs to the phosphoglycerate mutase family. BPG-dependent PGAM subfamily.</text>
</comment>
<accession>Q48SP2</accession>
<proteinExistence type="inferred from homology"/>
<keyword id="KW-0312">Gluconeogenesis</keyword>
<keyword id="KW-0324">Glycolysis</keyword>
<keyword id="KW-0413">Isomerase</keyword>
<sequence length="231" mass="26036">MVKLVFARHGESEWNKANLFTGWADVDLSEKGTQQAIDAGKLIKEAGIEFDLAFTSVLTRAIKTTNLALENAGQLWVPTEKSWRLNERHYGALTGKNKAEAAEQFGDEQVHIWRRSYDVLPPAMAKDDEYSAHKDRRYADLDPALIPDAENLKVTLERAMPYWEEKIAPALLDGKNVFVGAHGNSIRALVKHIKGLSDDEIMDVEIPNFPPLVFELDEKLNIVKEYYLGGE</sequence>
<dbReference type="EC" id="5.4.2.11" evidence="1"/>
<dbReference type="EMBL" id="CP000056">
    <property type="protein sequence ID" value="AAX72268.1"/>
    <property type="molecule type" value="Genomic_DNA"/>
</dbReference>
<dbReference type="RefSeq" id="WP_002983928.1">
    <property type="nucleotide sequence ID" value="NC_007296.2"/>
</dbReference>
<dbReference type="SMR" id="Q48SP2"/>
<dbReference type="KEGG" id="spb:M28_Spy1158"/>
<dbReference type="HOGENOM" id="CLU_033323_1_5_9"/>
<dbReference type="UniPathway" id="UPA00109">
    <property type="reaction ID" value="UER00186"/>
</dbReference>
<dbReference type="GO" id="GO:0004619">
    <property type="term" value="F:phosphoglycerate mutase activity"/>
    <property type="evidence" value="ECO:0007669"/>
    <property type="project" value="UniProtKB-EC"/>
</dbReference>
<dbReference type="GO" id="GO:0006094">
    <property type="term" value="P:gluconeogenesis"/>
    <property type="evidence" value="ECO:0007669"/>
    <property type="project" value="UniProtKB-UniRule"/>
</dbReference>
<dbReference type="GO" id="GO:0006096">
    <property type="term" value="P:glycolytic process"/>
    <property type="evidence" value="ECO:0007669"/>
    <property type="project" value="UniProtKB-UniRule"/>
</dbReference>
<dbReference type="CDD" id="cd07067">
    <property type="entry name" value="HP_PGM_like"/>
    <property type="match status" value="1"/>
</dbReference>
<dbReference type="FunFam" id="3.40.50.1240:FF:000003">
    <property type="entry name" value="2,3-bisphosphoglycerate-dependent phosphoglycerate mutase"/>
    <property type="match status" value="1"/>
</dbReference>
<dbReference type="Gene3D" id="3.40.50.1240">
    <property type="entry name" value="Phosphoglycerate mutase-like"/>
    <property type="match status" value="1"/>
</dbReference>
<dbReference type="HAMAP" id="MF_01039">
    <property type="entry name" value="PGAM_GpmA"/>
    <property type="match status" value="1"/>
</dbReference>
<dbReference type="InterPro" id="IPR013078">
    <property type="entry name" value="His_Pase_superF_clade-1"/>
</dbReference>
<dbReference type="InterPro" id="IPR029033">
    <property type="entry name" value="His_PPase_superfam"/>
</dbReference>
<dbReference type="InterPro" id="IPR005952">
    <property type="entry name" value="Phosphogly_mut1"/>
</dbReference>
<dbReference type="NCBIfam" id="TIGR01258">
    <property type="entry name" value="pgm_1"/>
    <property type="match status" value="1"/>
</dbReference>
<dbReference type="NCBIfam" id="NF010713">
    <property type="entry name" value="PRK14115.1"/>
    <property type="match status" value="1"/>
</dbReference>
<dbReference type="NCBIfam" id="NF010715">
    <property type="entry name" value="PRK14117.1"/>
    <property type="match status" value="1"/>
</dbReference>
<dbReference type="PANTHER" id="PTHR11931">
    <property type="entry name" value="PHOSPHOGLYCERATE MUTASE"/>
    <property type="match status" value="1"/>
</dbReference>
<dbReference type="Pfam" id="PF00300">
    <property type="entry name" value="His_Phos_1"/>
    <property type="match status" value="1"/>
</dbReference>
<dbReference type="PIRSF" id="PIRSF000709">
    <property type="entry name" value="6PFK_2-Ptase"/>
    <property type="match status" value="1"/>
</dbReference>
<dbReference type="SMART" id="SM00855">
    <property type="entry name" value="PGAM"/>
    <property type="match status" value="1"/>
</dbReference>
<dbReference type="SUPFAM" id="SSF53254">
    <property type="entry name" value="Phosphoglycerate mutase-like"/>
    <property type="match status" value="1"/>
</dbReference>
<reference key="1">
    <citation type="journal article" date="2005" name="J. Infect. Dis.">
        <title>Genome sequence of a serotype M28 strain of group A Streptococcus: potential new insights into puerperal sepsis and bacterial disease specificity.</title>
        <authorList>
            <person name="Green N.M."/>
            <person name="Zhang S."/>
            <person name="Porcella S.F."/>
            <person name="Nagiec M.J."/>
            <person name="Barbian K.D."/>
            <person name="Beres S.B."/>
            <person name="Lefebvre R.B."/>
            <person name="Musser J.M."/>
        </authorList>
    </citation>
    <scope>NUCLEOTIDE SEQUENCE [LARGE SCALE GENOMIC DNA]</scope>
    <source>
        <strain>MGAS6180</strain>
    </source>
</reference>
<organism>
    <name type="scientific">Streptococcus pyogenes serotype M28 (strain MGAS6180)</name>
    <dbReference type="NCBI Taxonomy" id="319701"/>
    <lineage>
        <taxon>Bacteria</taxon>
        <taxon>Bacillati</taxon>
        <taxon>Bacillota</taxon>
        <taxon>Bacilli</taxon>
        <taxon>Lactobacillales</taxon>
        <taxon>Streptococcaceae</taxon>
        <taxon>Streptococcus</taxon>
    </lineage>
</organism>
<feature type="chain" id="PRO_0000229145" description="2,3-bisphosphoglycerate-dependent phosphoglycerate mutase">
    <location>
        <begin position="1"/>
        <end position="231"/>
    </location>
</feature>
<feature type="active site" description="Tele-phosphohistidine intermediate" evidence="1">
    <location>
        <position position="9"/>
    </location>
</feature>
<feature type="active site" description="Proton donor/acceptor" evidence="1">
    <location>
        <position position="87"/>
    </location>
</feature>
<feature type="binding site" evidence="1">
    <location>
        <begin position="8"/>
        <end position="15"/>
    </location>
    <ligand>
        <name>substrate</name>
    </ligand>
</feature>
<feature type="binding site" evidence="1">
    <location>
        <begin position="21"/>
        <end position="22"/>
    </location>
    <ligand>
        <name>substrate</name>
    </ligand>
</feature>
<feature type="binding site" evidence="1">
    <location>
        <position position="60"/>
    </location>
    <ligand>
        <name>substrate</name>
    </ligand>
</feature>
<feature type="binding site" evidence="1">
    <location>
        <begin position="87"/>
        <end position="90"/>
    </location>
    <ligand>
        <name>substrate</name>
    </ligand>
</feature>
<feature type="binding site" evidence="1">
    <location>
        <position position="98"/>
    </location>
    <ligand>
        <name>substrate</name>
    </ligand>
</feature>
<feature type="binding site" evidence="1">
    <location>
        <begin position="114"/>
        <end position="115"/>
    </location>
    <ligand>
        <name>substrate</name>
    </ligand>
</feature>
<feature type="binding site" evidence="1">
    <location>
        <begin position="183"/>
        <end position="184"/>
    </location>
    <ligand>
        <name>substrate</name>
    </ligand>
</feature>
<feature type="site" description="Transition state stabilizer" evidence="1">
    <location>
        <position position="182"/>
    </location>
</feature>
<protein>
    <recommendedName>
        <fullName evidence="1">2,3-bisphosphoglycerate-dependent phosphoglycerate mutase</fullName>
        <shortName evidence="1">BPG-dependent PGAM</shortName>
        <shortName evidence="1">PGAM</shortName>
        <shortName evidence="1">Phosphoglyceromutase</shortName>
        <shortName evidence="1">dPGM</shortName>
        <ecNumber evidence="1">5.4.2.11</ecNumber>
    </recommendedName>
</protein>
<evidence type="ECO:0000255" key="1">
    <source>
        <dbReference type="HAMAP-Rule" id="MF_01039"/>
    </source>
</evidence>